<keyword id="KW-0963">Cytoplasm</keyword>
<keyword id="KW-0489">Methyltransferase</keyword>
<keyword id="KW-0545">Nucleotide biosynthesis</keyword>
<keyword id="KW-1185">Reference proteome</keyword>
<keyword id="KW-0808">Transferase</keyword>
<evidence type="ECO:0000255" key="1">
    <source>
        <dbReference type="HAMAP-Rule" id="MF_00008"/>
    </source>
</evidence>
<organism>
    <name type="scientific">Bacillus licheniformis (strain ATCC 14580 / DSM 13 / JCM 2505 / CCUG 7422 / NBRC 12200 / NCIMB 9375 / NCTC 10341 / NRRL NRS-1264 / Gibson 46)</name>
    <dbReference type="NCBI Taxonomy" id="279010"/>
    <lineage>
        <taxon>Bacteria</taxon>
        <taxon>Bacillati</taxon>
        <taxon>Bacillota</taxon>
        <taxon>Bacilli</taxon>
        <taxon>Bacillales</taxon>
        <taxon>Bacillaceae</taxon>
        <taxon>Bacillus</taxon>
    </lineage>
</organism>
<name>TYSY_BACLD</name>
<proteinExistence type="inferred from homology"/>
<reference key="1">
    <citation type="journal article" date="2004" name="J. Mol. Microbiol. Biotechnol.">
        <title>The complete genome sequence of Bacillus licheniformis DSM13, an organism with great industrial potential.</title>
        <authorList>
            <person name="Veith B."/>
            <person name="Herzberg C."/>
            <person name="Steckel S."/>
            <person name="Feesche J."/>
            <person name="Maurer K.H."/>
            <person name="Ehrenreich P."/>
            <person name="Baeumer S."/>
            <person name="Henne A."/>
            <person name="Liesegang H."/>
            <person name="Merkl R."/>
            <person name="Ehrenreich A."/>
            <person name="Gottschalk G."/>
        </authorList>
    </citation>
    <scope>NUCLEOTIDE SEQUENCE [LARGE SCALE GENOMIC DNA]</scope>
    <source>
        <strain>ATCC 14580 / DSM 13 / JCM 2505 / CCUG 7422 / NBRC 12200 / NCIMB 9375 / NCTC 10341 / NRRL NRS-1264 / Gibson 46</strain>
    </source>
</reference>
<reference key="2">
    <citation type="journal article" date="2004" name="Genome Biol.">
        <title>Complete genome sequence of the industrial bacterium Bacillus licheniformis and comparisons with closely related Bacillus species.</title>
        <authorList>
            <person name="Rey M.W."/>
            <person name="Ramaiya P."/>
            <person name="Nelson B.A."/>
            <person name="Brody-Karpin S.D."/>
            <person name="Zaretsky E.J."/>
            <person name="Tang M."/>
            <person name="Lopez de Leon A."/>
            <person name="Xiang H."/>
            <person name="Gusti V."/>
            <person name="Clausen I.G."/>
            <person name="Olsen P.B."/>
            <person name="Rasmussen M.D."/>
            <person name="Andersen J.T."/>
            <person name="Joergensen P.L."/>
            <person name="Larsen T.S."/>
            <person name="Sorokin A."/>
            <person name="Bolotin A."/>
            <person name="Lapidus A."/>
            <person name="Galleron N."/>
            <person name="Ehrlich S.D."/>
            <person name="Berka R.M."/>
        </authorList>
    </citation>
    <scope>NUCLEOTIDE SEQUENCE [LARGE SCALE GENOMIC DNA]</scope>
    <source>
        <strain>ATCC 14580 / DSM 13 / JCM 2505 / CCUG 7422 / NBRC 12200 / NCIMB 9375 / NCTC 10341 / NRRL NRS-1264 / Gibson 46</strain>
    </source>
</reference>
<protein>
    <recommendedName>
        <fullName evidence="1">Thymidylate synthase</fullName>
        <shortName evidence="1">TS</shortName>
        <shortName evidence="1">TSase</shortName>
        <ecNumber evidence="1">2.1.1.45</ecNumber>
    </recommendedName>
</protein>
<dbReference type="EC" id="2.1.1.45" evidence="1"/>
<dbReference type="EMBL" id="AE017333">
    <property type="protein sequence ID" value="AAU40920.1"/>
    <property type="molecule type" value="Genomic_DNA"/>
</dbReference>
<dbReference type="EMBL" id="CP000002">
    <property type="protein sequence ID" value="AAU23558.1"/>
    <property type="molecule type" value="Genomic_DNA"/>
</dbReference>
<dbReference type="RefSeq" id="WP_003182218.1">
    <property type="nucleotide sequence ID" value="NC_006322.1"/>
</dbReference>
<dbReference type="SMR" id="Q65J44"/>
<dbReference type="STRING" id="279010.BL02642"/>
<dbReference type="KEGG" id="bld:BLi02029"/>
<dbReference type="KEGG" id="bli:BL02642"/>
<dbReference type="eggNOG" id="COG0207">
    <property type="taxonomic scope" value="Bacteria"/>
</dbReference>
<dbReference type="HOGENOM" id="CLU_021669_0_0_9"/>
<dbReference type="UniPathway" id="UPA00575"/>
<dbReference type="Proteomes" id="UP000000606">
    <property type="component" value="Chromosome"/>
</dbReference>
<dbReference type="GO" id="GO:0005829">
    <property type="term" value="C:cytosol"/>
    <property type="evidence" value="ECO:0007669"/>
    <property type="project" value="TreeGrafter"/>
</dbReference>
<dbReference type="GO" id="GO:0004799">
    <property type="term" value="F:thymidylate synthase activity"/>
    <property type="evidence" value="ECO:0007669"/>
    <property type="project" value="UniProtKB-UniRule"/>
</dbReference>
<dbReference type="GO" id="GO:0006231">
    <property type="term" value="P:dTMP biosynthetic process"/>
    <property type="evidence" value="ECO:0007669"/>
    <property type="project" value="UniProtKB-UniRule"/>
</dbReference>
<dbReference type="GO" id="GO:0006235">
    <property type="term" value="P:dTTP biosynthetic process"/>
    <property type="evidence" value="ECO:0007669"/>
    <property type="project" value="UniProtKB-UniRule"/>
</dbReference>
<dbReference type="GO" id="GO:0032259">
    <property type="term" value="P:methylation"/>
    <property type="evidence" value="ECO:0007669"/>
    <property type="project" value="UniProtKB-KW"/>
</dbReference>
<dbReference type="CDD" id="cd00351">
    <property type="entry name" value="TS_Pyrimidine_HMase"/>
    <property type="match status" value="1"/>
</dbReference>
<dbReference type="FunFam" id="3.30.572.10:FF:000010">
    <property type="entry name" value="Thymidylate synthase 1"/>
    <property type="match status" value="1"/>
</dbReference>
<dbReference type="Gene3D" id="3.30.572.10">
    <property type="entry name" value="Thymidylate synthase/dCMP hydroxymethylase domain"/>
    <property type="match status" value="1"/>
</dbReference>
<dbReference type="HAMAP" id="MF_00008">
    <property type="entry name" value="Thymidy_synth_bact"/>
    <property type="match status" value="1"/>
</dbReference>
<dbReference type="InterPro" id="IPR045097">
    <property type="entry name" value="Thymidate_synth/dCMP_Mease"/>
</dbReference>
<dbReference type="InterPro" id="IPR023451">
    <property type="entry name" value="Thymidate_synth/dCMP_Mease_dom"/>
</dbReference>
<dbReference type="InterPro" id="IPR036926">
    <property type="entry name" value="Thymidate_synth/dCMP_Mease_sf"/>
</dbReference>
<dbReference type="InterPro" id="IPR000398">
    <property type="entry name" value="Thymidylate_synthase"/>
</dbReference>
<dbReference type="InterPro" id="IPR020940">
    <property type="entry name" value="Thymidylate_synthase_AS"/>
</dbReference>
<dbReference type="NCBIfam" id="NF002495">
    <property type="entry name" value="PRK01827.1-1"/>
    <property type="match status" value="1"/>
</dbReference>
<dbReference type="NCBIfam" id="TIGR03284">
    <property type="entry name" value="thym_sym"/>
    <property type="match status" value="1"/>
</dbReference>
<dbReference type="PANTHER" id="PTHR11548">
    <property type="entry name" value="THYMIDYLATE SYNTHASE 1"/>
    <property type="match status" value="1"/>
</dbReference>
<dbReference type="PANTHER" id="PTHR11548:SF1">
    <property type="entry name" value="THYMIDYLATE SYNTHASE 1"/>
    <property type="match status" value="1"/>
</dbReference>
<dbReference type="Pfam" id="PF00303">
    <property type="entry name" value="Thymidylat_synt"/>
    <property type="match status" value="1"/>
</dbReference>
<dbReference type="PRINTS" id="PR00108">
    <property type="entry name" value="THYMDSNTHASE"/>
</dbReference>
<dbReference type="SUPFAM" id="SSF55831">
    <property type="entry name" value="Thymidylate synthase/dCMP hydroxymethylase"/>
    <property type="match status" value="1"/>
</dbReference>
<dbReference type="PROSITE" id="PS00091">
    <property type="entry name" value="THYMIDYLATE_SYNTHASE"/>
    <property type="match status" value="1"/>
</dbReference>
<gene>
    <name evidence="1" type="primary">thyA</name>
    <name type="ordered locus">BLi02029</name>
    <name type="ordered locus">BL02642</name>
</gene>
<sequence length="279" mass="32760">MSHYDQQYNAIIQKIIESGISDEEYQVRTKWDSDGTPAHTLSIMSEKMRFDNSEVPILTTKKVAWKTAIKELLWIWQLKSNDVQVLNDMGVHIWDQWRLEDGTIGAAYGYQLGKKNRTVNGQKVDQVDYLLHQLKHNPSSRRHLTMLWNPDDLDGMALTPCVYETQWYVKEGKLSLEVRARSNDMALGNPFNVFQYNVLQRMIAQVLGYELGEYIFNIGDCHIYTRHIDNLNIQMKREQYEAPKLWINPDIKNFYDFTIDDFKLIDYKHGDKLTFEVAV</sequence>
<comment type="function">
    <text evidence="1">Catalyzes the reductive methylation of 2'-deoxyuridine-5'-monophosphate (dUMP) to 2'-deoxythymidine-5'-monophosphate (dTMP) while utilizing 5,10-methylenetetrahydrofolate (mTHF) as the methyl donor and reductant in the reaction, yielding dihydrofolate (DHF) as a by-product. This enzymatic reaction provides an intracellular de novo source of dTMP, an essential precursor for DNA biosynthesis.</text>
</comment>
<comment type="catalytic activity">
    <reaction evidence="1">
        <text>dUMP + (6R)-5,10-methylene-5,6,7,8-tetrahydrofolate = 7,8-dihydrofolate + dTMP</text>
        <dbReference type="Rhea" id="RHEA:12104"/>
        <dbReference type="ChEBI" id="CHEBI:15636"/>
        <dbReference type="ChEBI" id="CHEBI:57451"/>
        <dbReference type="ChEBI" id="CHEBI:63528"/>
        <dbReference type="ChEBI" id="CHEBI:246422"/>
        <dbReference type="EC" id="2.1.1.45"/>
    </reaction>
</comment>
<comment type="pathway">
    <text evidence="1">Pyrimidine metabolism; dTTP biosynthesis.</text>
</comment>
<comment type="subunit">
    <text evidence="1">Homodimer.</text>
</comment>
<comment type="subcellular location">
    <subcellularLocation>
        <location evidence="1">Cytoplasm</location>
    </subcellularLocation>
</comment>
<comment type="similarity">
    <text evidence="1">Belongs to the thymidylate synthase family. Bacterial-type ThyA subfamily.</text>
</comment>
<accession>Q65J44</accession>
<accession>Q62UK1</accession>
<feature type="chain" id="PRO_0000140926" description="Thymidylate synthase">
    <location>
        <begin position="1"/>
        <end position="279"/>
    </location>
</feature>
<feature type="active site" description="Nucleophile" evidence="1">
    <location>
        <position position="161"/>
    </location>
</feature>
<feature type="binding site" evidence="1">
    <location>
        <begin position="141"/>
        <end position="142"/>
    </location>
    <ligand>
        <name>dUMP</name>
        <dbReference type="ChEBI" id="CHEBI:246422"/>
        <note>ligand shared between dimeric partners</note>
    </ligand>
</feature>
<feature type="binding site" description="in other chain" evidence="1">
    <location>
        <begin position="181"/>
        <end position="184"/>
    </location>
    <ligand>
        <name>dUMP</name>
        <dbReference type="ChEBI" id="CHEBI:246422"/>
        <note>ligand shared between dimeric partners</note>
    </ligand>
</feature>
<feature type="binding site" evidence="1">
    <location>
        <position position="184"/>
    </location>
    <ligand>
        <name>(6R)-5,10-methylene-5,6,7,8-tetrahydrofolate</name>
        <dbReference type="ChEBI" id="CHEBI:15636"/>
    </ligand>
</feature>
<feature type="binding site" description="in other chain" evidence="1">
    <location>
        <position position="192"/>
    </location>
    <ligand>
        <name>dUMP</name>
        <dbReference type="ChEBI" id="CHEBI:246422"/>
        <note>ligand shared between dimeric partners</note>
    </ligand>
</feature>
<feature type="binding site" description="in other chain" evidence="1">
    <location>
        <begin position="222"/>
        <end position="224"/>
    </location>
    <ligand>
        <name>dUMP</name>
        <dbReference type="ChEBI" id="CHEBI:246422"/>
        <note>ligand shared between dimeric partners</note>
    </ligand>
</feature>
<feature type="binding site" evidence="1">
    <location>
        <position position="278"/>
    </location>
    <ligand>
        <name>(6R)-5,10-methylene-5,6,7,8-tetrahydrofolate</name>
        <dbReference type="ChEBI" id="CHEBI:15636"/>
    </ligand>
</feature>